<gene>
    <name type="primary">AEP2</name>
    <name type="synonym">ATP13</name>
    <name type="ordered locus">YMR282C</name>
    <name type="ORF">YM8021.08C</name>
</gene>
<accession>P22136</accession>
<accession>D6W0A9</accession>
<accession>P23115</accession>
<evidence type="ECO:0000255" key="1"/>
<evidence type="ECO:0000269" key="2">
    <source>
    </source>
</evidence>
<evidence type="ECO:0000269" key="3">
    <source>
    </source>
</evidence>
<evidence type="ECO:0000269" key="4">
    <source>
    </source>
</evidence>
<evidence type="ECO:0000269" key="5">
    <source>
    </source>
</evidence>
<evidence type="ECO:0000305" key="6"/>
<organism>
    <name type="scientific">Saccharomyces cerevisiae (strain ATCC 204508 / S288c)</name>
    <name type="common">Baker's yeast</name>
    <dbReference type="NCBI Taxonomy" id="559292"/>
    <lineage>
        <taxon>Eukaryota</taxon>
        <taxon>Fungi</taxon>
        <taxon>Dikarya</taxon>
        <taxon>Ascomycota</taxon>
        <taxon>Saccharomycotina</taxon>
        <taxon>Saccharomycetes</taxon>
        <taxon>Saccharomycetales</taxon>
        <taxon>Saccharomycetaceae</taxon>
        <taxon>Saccharomyces</taxon>
    </lineage>
</organism>
<protein>
    <recommendedName>
        <fullName>ATPase expression protein 2, mitochondrial</fullName>
    </recommendedName>
</protein>
<comment type="function">
    <text evidence="2 4 5">Required for translation of the mitochondrial OLI1 transcript coding for the mitochondrial ATP synthase subunit 9.</text>
</comment>
<comment type="subunit">
    <text>Binds to the 5'UTR of the OLI1 mRNA.</text>
</comment>
<comment type="subcellular location">
    <subcellularLocation>
        <location>Mitochondrion</location>
    </subcellularLocation>
</comment>
<comment type="miscellaneous">
    <text evidence="3">Present with 2680 molecules/cell in log phase SD medium.</text>
</comment>
<comment type="similarity">
    <text evidence="6">Belongs to the AEP2 family.</text>
</comment>
<comment type="sequence caution" evidence="6">
    <conflict type="frameshift">
        <sequence resource="EMBL-CDS" id="CAA39672"/>
    </conflict>
</comment>
<sequence length="580" mass="67523">MWINRLVKHPSYSVLRFYTKRLCTVSVKSLREFGVLPNSTICHSVYPRRTYVMGRAVINDILIKKSYSTHTVCAIDRSKDENNGSAYDKFEAKGIPIDVHTLKRIISSSGMDESEFSKSISYLFAKTVDPEPKDVLSLEDLSFLLSKLYTQRFQIRRICRDINAKYSEFWFKLFSLYAEKVDAKRNQVNLRNTKLDACEIFDANLMIKNFIELGQLGKAQKILSFILDRNPDILLSPKNADISTIVHFLQLRCGALAPYWKIPDNSEQKQGFLRKMVRLGAKNTSIRLSSTYKAMDHQTLLKIADLALQEKKLLNSEDLLSTLIQSFGHLGQTQILERCIEHIWQISPQEFPSHVVIKHRGCYPSSKILVSILVSFYFNDHDLHRGLSILDSFIKHYPDVKLDALFWRRLFQLSHFAWTPANDKKATSVVRCWHLMKQWYASKRLRPSVDYETLRQLYDIMKKTGNFPLGIDVLRSFKPGIERTRAENAGKVNNIIIKYQKCIIKELVNRGRFSAVREFIDSYGFDRKMTKDLNIFCANRMFLRSKKMKNKIENKKEREKVRLDSFDDDEDDGMIIGSLW</sequence>
<name>AEP2_YEAST</name>
<dbReference type="EMBL" id="X56215">
    <property type="protein sequence ID" value="CAA39672.2"/>
    <property type="status" value="ALT_FRAME"/>
    <property type="molecule type" value="Genomic_DNA"/>
</dbReference>
<dbReference type="EMBL" id="M59860">
    <property type="protein sequence ID" value="AAA34412.1"/>
    <property type="molecule type" value="Genomic_DNA"/>
</dbReference>
<dbReference type="EMBL" id="Z49704">
    <property type="protein sequence ID" value="CAA89780.1"/>
    <property type="molecule type" value="Genomic_DNA"/>
</dbReference>
<dbReference type="EMBL" id="X80795">
    <property type="protein sequence ID" value="CAA56771.1"/>
    <property type="molecule type" value="Genomic_DNA"/>
</dbReference>
<dbReference type="EMBL" id="BK006946">
    <property type="protein sequence ID" value="DAA10183.1"/>
    <property type="molecule type" value="Genomic_DNA"/>
</dbReference>
<dbReference type="PIR" id="S54589">
    <property type="entry name" value="S54589"/>
</dbReference>
<dbReference type="RefSeq" id="NP_014009.1">
    <property type="nucleotide sequence ID" value="NM_001182789.1"/>
</dbReference>
<dbReference type="BioGRID" id="35461">
    <property type="interactions" value="266"/>
</dbReference>
<dbReference type="DIP" id="DIP-6693N"/>
<dbReference type="FunCoup" id="P22136">
    <property type="interactions" value="58"/>
</dbReference>
<dbReference type="IntAct" id="P22136">
    <property type="interactions" value="5"/>
</dbReference>
<dbReference type="STRING" id="4932.YMR282C"/>
<dbReference type="iPTMnet" id="P22136"/>
<dbReference type="PaxDb" id="4932-YMR282C"/>
<dbReference type="PeptideAtlas" id="P22136"/>
<dbReference type="EnsemblFungi" id="YMR282C_mRNA">
    <property type="protein sequence ID" value="YMR282C"/>
    <property type="gene ID" value="YMR282C"/>
</dbReference>
<dbReference type="GeneID" id="855325"/>
<dbReference type="KEGG" id="sce:YMR282C"/>
<dbReference type="AGR" id="SGD:S000004895"/>
<dbReference type="SGD" id="S000004895">
    <property type="gene designation" value="AEP2"/>
</dbReference>
<dbReference type="VEuPathDB" id="FungiDB:YMR282C"/>
<dbReference type="eggNOG" id="ENOG502RX9I">
    <property type="taxonomic scope" value="Eukaryota"/>
</dbReference>
<dbReference type="HOGENOM" id="CLU_035070_0_0_1"/>
<dbReference type="InParanoid" id="P22136"/>
<dbReference type="OMA" id="LQLRCGA"/>
<dbReference type="OrthoDB" id="4062665at2759"/>
<dbReference type="BioCyc" id="YEAST:G3O-32952-MONOMER"/>
<dbReference type="BioGRID-ORCS" id="855325">
    <property type="hits" value="0 hits in 10 CRISPR screens"/>
</dbReference>
<dbReference type="PRO" id="PR:P22136"/>
<dbReference type="Proteomes" id="UP000002311">
    <property type="component" value="Chromosome XIII"/>
</dbReference>
<dbReference type="RNAct" id="P22136">
    <property type="molecule type" value="protein"/>
</dbReference>
<dbReference type="GO" id="GO:0005739">
    <property type="term" value="C:mitochondrion"/>
    <property type="evidence" value="ECO:0000314"/>
    <property type="project" value="SGD"/>
</dbReference>
<dbReference type="GO" id="GO:0003723">
    <property type="term" value="F:RNA binding"/>
    <property type="evidence" value="ECO:0007669"/>
    <property type="project" value="UniProtKB-KW"/>
</dbReference>
<dbReference type="GO" id="GO:0070124">
    <property type="term" value="P:mitochondrial translational initiation"/>
    <property type="evidence" value="ECO:0000316"/>
    <property type="project" value="SGD"/>
</dbReference>
<dbReference type="GO" id="GO:0006417">
    <property type="term" value="P:regulation of translation"/>
    <property type="evidence" value="ECO:0007669"/>
    <property type="project" value="UniProtKB-KW"/>
</dbReference>
<dbReference type="InterPro" id="IPR024319">
    <property type="entry name" value="ATPase_expression_mit"/>
</dbReference>
<dbReference type="Pfam" id="PF12921">
    <property type="entry name" value="ATP13"/>
    <property type="match status" value="1"/>
</dbReference>
<feature type="transit peptide" description="Mitochondrion" evidence="1">
    <location>
        <begin position="1"/>
        <end position="40"/>
    </location>
</feature>
<feature type="chain" id="PRO_0000002536" description="ATPase expression protein 2, mitochondrial">
    <location>
        <begin position="41"/>
        <end position="580"/>
    </location>
</feature>
<feature type="mutagenesis site" description="Suppresses a T-to-C nucleotide transition mutation in the 5' untranslated region of OLI1 mRNA localized 16 nucleotides upstream of the OLI1 reading frame." evidence="2">
    <original>L</original>
    <variation>P</variation>
    <location>
        <position position="413"/>
    </location>
</feature>
<feature type="sequence conflict" description="In Ref. 1; CAA39672." evidence="6" ref="1">
    <original>G</original>
    <variation>N</variation>
    <location>
        <position position="214"/>
    </location>
</feature>
<feature type="sequence conflict" description="In Ref. 1; AAA34412." evidence="6" ref="1">
    <original>I</original>
    <variation>V</variation>
    <location>
        <position position="481"/>
    </location>
</feature>
<keyword id="KW-0496">Mitochondrion</keyword>
<keyword id="KW-1185">Reference proteome</keyword>
<keyword id="KW-0694">RNA-binding</keyword>
<keyword id="KW-0809">Transit peptide</keyword>
<keyword id="KW-0810">Translation regulation</keyword>
<proteinExistence type="evidence at protein level"/>
<reference key="1">
    <citation type="journal article" date="1991" name="FEBS Lett.">
        <title>ATP13, a nuclear gene of Saccharomyces cerevisiae essential for the expression of subunit 9 of the mitochondrial ATPase.</title>
        <authorList>
            <person name="Ackerman S.H."/>
            <person name="Gatti D.L."/>
            <person name="Gellefors P."/>
            <person name="Douglas M.G."/>
            <person name="Tzagoloff A."/>
        </authorList>
    </citation>
    <scope>NUCLEOTIDE SEQUENCE [GENOMIC DNA]</scope>
    <scope>FUNCTION</scope>
</reference>
<reference key="2">
    <citation type="journal article" date="1991" name="Curr. Genet.">
        <title>Characterization of a yeast nuclear gene, AEP2, required for accumulation of mitochondrial mRNA encoding subunit 9 of the ATP synthase.</title>
        <authorList>
            <person name="Payne M.J."/>
            <person name="Finnegan P.M."/>
            <person name="Keramidaris E."/>
            <person name="Lukins H.B."/>
        </authorList>
    </citation>
    <scope>NUCLEOTIDE SEQUENCE [GENOMIC DNA]</scope>
    <scope>FUNCTION</scope>
</reference>
<reference key="3">
    <citation type="journal article" date="1997" name="Nature">
        <title>The nucleotide sequence of Saccharomyces cerevisiae chromosome XIII.</title>
        <authorList>
            <person name="Bowman S."/>
            <person name="Churcher C.M."/>
            <person name="Badcock K."/>
            <person name="Brown D."/>
            <person name="Chillingworth T."/>
            <person name="Connor R."/>
            <person name="Dedman K."/>
            <person name="Devlin K."/>
            <person name="Gentles S."/>
            <person name="Hamlin N."/>
            <person name="Hunt S."/>
            <person name="Jagels K."/>
            <person name="Lye G."/>
            <person name="Moule S."/>
            <person name="Odell C."/>
            <person name="Pearson D."/>
            <person name="Rajandream M.A."/>
            <person name="Rice P."/>
            <person name="Skelton J."/>
            <person name="Walsh S.V."/>
            <person name="Whitehead S."/>
            <person name="Barrell B.G."/>
        </authorList>
    </citation>
    <scope>NUCLEOTIDE SEQUENCE [LARGE SCALE GENOMIC DNA]</scope>
    <source>
        <strain>ATCC 204508 / S288c</strain>
    </source>
</reference>
<reference key="4">
    <citation type="journal article" date="2014" name="G3 (Bethesda)">
        <title>The reference genome sequence of Saccharomyces cerevisiae: Then and now.</title>
        <authorList>
            <person name="Engel S.R."/>
            <person name="Dietrich F.S."/>
            <person name="Fisk D.G."/>
            <person name="Binkley G."/>
            <person name="Balakrishnan R."/>
            <person name="Costanzo M.C."/>
            <person name="Dwight S.S."/>
            <person name="Hitz B.C."/>
            <person name="Karra K."/>
            <person name="Nash R.S."/>
            <person name="Weng S."/>
            <person name="Wong E.D."/>
            <person name="Lloyd P."/>
            <person name="Skrzypek M.S."/>
            <person name="Miyasato S.R."/>
            <person name="Simison M."/>
            <person name="Cherry J.M."/>
        </authorList>
    </citation>
    <scope>GENOME REANNOTATION</scope>
    <source>
        <strain>ATCC 204508 / S288c</strain>
    </source>
</reference>
<reference key="5">
    <citation type="journal article" date="1994" name="Cell">
        <title>Rit1, a tRNA backbone-modifying enzyme that mediates initiator and elongator tRNA discrimination.</title>
        <authorList>
            <person name="Aastroem S.U."/>
            <person name="Bystroem A.S."/>
        </authorList>
    </citation>
    <scope>NUCLEOTIDE SEQUENCE [GENOMIC DNA] OF 1-108</scope>
    <source>
        <strain>S288c / YPH1</strain>
    </source>
</reference>
<reference key="6">
    <citation type="journal article" date="1999" name="Genetics">
        <title>Suppression of a nuclear aep2 mutation in Saccharomyces cerevisiae by a base substitution in the 5'-untranslated region of the mitochondrial oli1 gene encoding subunit 9 of ATP synthase.</title>
        <authorList>
            <person name="Ellis T.P."/>
            <person name="Lukins H.B."/>
            <person name="Nagley P."/>
            <person name="Corner B.E."/>
        </authorList>
    </citation>
    <scope>FUNCTION</scope>
    <scope>MRNA-BINDING</scope>
    <scope>MUTAGENESIS OF LEU-413</scope>
</reference>
<reference key="7">
    <citation type="journal article" date="2003" name="Nature">
        <title>Global analysis of protein expression in yeast.</title>
        <authorList>
            <person name="Ghaemmaghami S."/>
            <person name="Huh W.-K."/>
            <person name="Bower K."/>
            <person name="Howson R.W."/>
            <person name="Belle A."/>
            <person name="Dephoure N."/>
            <person name="O'Shea E.K."/>
            <person name="Weissman J.S."/>
        </authorList>
    </citation>
    <scope>LEVEL OF PROTEIN EXPRESSION [LARGE SCALE ANALYSIS]</scope>
</reference>